<name>SCF_BOVIN</name>
<accession>Q28132</accession>
<accession>Q9TU74</accession>
<reference key="1">
    <citation type="journal article" date="1994" name="Biochim. Biophys. Acta">
        <title>Cloning and characterization of cDNAs encoding two normal isoforms of bovine stem cell factor.</title>
        <authorList>
            <person name="Zhou J."/>
            <person name="Hikono H."/>
            <person name="Ohtaki M."/>
            <person name="Kubota T."/>
            <person name="Sakurai M."/>
        </authorList>
    </citation>
    <scope>NUCLEOTIDE SEQUENCE [MRNA] (ISOFORMS 1 AND 2)</scope>
    <source>
        <tissue>Spleen</tissue>
    </source>
</reference>
<reference key="2">
    <citation type="submission" date="1999-10" db="EMBL/GenBank/DDBJ databases">
        <title>Bovine counterpart of stem cell factor.</title>
        <authorList>
            <person name="Kudo T."/>
        </authorList>
    </citation>
    <scope>NUCLEOTIDE SEQUENCE (ISOFORM 1)</scope>
    <source>
        <tissue>Fetal brain</tissue>
    </source>
</reference>
<reference key="3">
    <citation type="journal article" date="1999" name="Mamm. Genome">
        <title>A missense mutation in the bovine MGF gene is associated with the roan phenotype in Belgian Blue and Shorthorn cattle.</title>
        <authorList>
            <person name="Seitz J.J."/>
            <person name="Schmutz S.M."/>
            <person name="Thue T.D."/>
            <person name="Buchanan F.C."/>
        </authorList>
    </citation>
    <scope>NUCLEOTIDE SEQUENCE [GENOMIC DNA] OF 204-239</scope>
    <scope>VARIANT ASP-218</scope>
    <source>
        <strain>Belgian blue</strain>
    </source>
</reference>
<protein>
    <recommendedName>
        <fullName>Kit ligand</fullName>
    </recommendedName>
    <alternativeName>
        <fullName>Mast cell growth factor</fullName>
        <shortName>MGF</shortName>
    </alternativeName>
    <alternativeName>
        <fullName>Stem cell factor</fullName>
        <shortName>SCF</shortName>
    </alternativeName>
    <alternativeName>
        <fullName>c-Kit ligand</fullName>
    </alternativeName>
    <component>
        <recommendedName>
            <fullName>Soluble KIT ligand</fullName>
            <shortName>sKITLG</shortName>
        </recommendedName>
    </component>
</protein>
<dbReference type="EMBL" id="D28934">
    <property type="protein sequence ID" value="BAA06061.1"/>
    <property type="molecule type" value="mRNA"/>
</dbReference>
<dbReference type="EMBL" id="AB033716">
    <property type="protein sequence ID" value="BAA94808.1"/>
    <property type="molecule type" value="mRNA"/>
</dbReference>
<dbReference type="EMBL" id="AF120154">
    <property type="protein sequence ID" value="AAD55355.1"/>
    <property type="molecule type" value="Genomic_DNA"/>
</dbReference>
<dbReference type="PIR" id="S47571">
    <property type="entry name" value="S47571"/>
</dbReference>
<dbReference type="RefSeq" id="NP_776800.1">
    <molecule id="Q28132-1"/>
    <property type="nucleotide sequence ID" value="NM_174375.2"/>
</dbReference>
<dbReference type="SMR" id="Q28132"/>
<dbReference type="FunCoup" id="Q28132">
    <property type="interactions" value="564"/>
</dbReference>
<dbReference type="STRING" id="9913.ENSBTAP00000023349"/>
<dbReference type="GlyCosmos" id="Q28132">
    <property type="glycosylation" value="3 sites, No reported glycans"/>
</dbReference>
<dbReference type="GlyGen" id="Q28132">
    <property type="glycosylation" value="3 sites"/>
</dbReference>
<dbReference type="PaxDb" id="9913-ENSBTAP00000023349"/>
<dbReference type="Ensembl" id="ENSBTAT00000065938.3">
    <molecule id="Q28132-2"/>
    <property type="protein sequence ID" value="ENSBTAP00000055628.2"/>
    <property type="gene ID" value="ENSBTAG00000017549.7"/>
</dbReference>
<dbReference type="GeneID" id="281885"/>
<dbReference type="KEGG" id="bta:281885"/>
<dbReference type="CTD" id="4254"/>
<dbReference type="VEuPathDB" id="HostDB:ENSBTAG00000017549"/>
<dbReference type="eggNOG" id="ENOG502QTGT">
    <property type="taxonomic scope" value="Eukaryota"/>
</dbReference>
<dbReference type="GeneTree" id="ENSGT00390000018272"/>
<dbReference type="HOGENOM" id="CLU_090207_0_0_1"/>
<dbReference type="InParanoid" id="Q28132"/>
<dbReference type="OMA" id="TKGICRN"/>
<dbReference type="OrthoDB" id="8445223at2759"/>
<dbReference type="TreeFam" id="TF330811"/>
<dbReference type="Reactome" id="R-BTA-1257604">
    <property type="pathway name" value="PIP3 activates AKT signaling"/>
</dbReference>
<dbReference type="Reactome" id="R-BTA-1433557">
    <property type="pathway name" value="Signaling by SCF-KIT"/>
</dbReference>
<dbReference type="Reactome" id="R-BTA-1433559">
    <property type="pathway name" value="Regulation of KIT signaling"/>
</dbReference>
<dbReference type="Reactome" id="R-BTA-5673001">
    <property type="pathway name" value="RAF/MAP kinase cascade"/>
</dbReference>
<dbReference type="Reactome" id="R-BTA-6811558">
    <property type="pathway name" value="PI5P, PP2A and IER3 Regulate PI3K/AKT Signaling"/>
</dbReference>
<dbReference type="Reactome" id="R-BTA-9856649">
    <property type="pathway name" value="Transcriptional and post-translational regulation of MITF-M expression and activity"/>
</dbReference>
<dbReference type="Proteomes" id="UP000009136">
    <property type="component" value="Chromosome 5"/>
</dbReference>
<dbReference type="Bgee" id="ENSBTAG00000017549">
    <property type="expression patterns" value="Expressed in intramuscular adipose tissue and 100 other cell types or tissues"/>
</dbReference>
<dbReference type="GO" id="GO:0005737">
    <property type="term" value="C:cytoplasm"/>
    <property type="evidence" value="ECO:0000250"/>
    <property type="project" value="UniProtKB"/>
</dbReference>
<dbReference type="GO" id="GO:0005856">
    <property type="term" value="C:cytoskeleton"/>
    <property type="evidence" value="ECO:0007669"/>
    <property type="project" value="UniProtKB-SubCell"/>
</dbReference>
<dbReference type="GO" id="GO:0005576">
    <property type="term" value="C:extracellular region"/>
    <property type="evidence" value="ECO:0007669"/>
    <property type="project" value="UniProtKB-SubCell"/>
</dbReference>
<dbReference type="GO" id="GO:0030175">
    <property type="term" value="C:filopodium"/>
    <property type="evidence" value="ECO:0000250"/>
    <property type="project" value="UniProtKB"/>
</dbReference>
<dbReference type="GO" id="GO:0030027">
    <property type="term" value="C:lamellipodium"/>
    <property type="evidence" value="ECO:0000250"/>
    <property type="project" value="UniProtKB"/>
</dbReference>
<dbReference type="GO" id="GO:0005886">
    <property type="term" value="C:plasma membrane"/>
    <property type="evidence" value="ECO:0000250"/>
    <property type="project" value="UniProtKB"/>
</dbReference>
<dbReference type="GO" id="GO:0005125">
    <property type="term" value="F:cytokine activity"/>
    <property type="evidence" value="ECO:0000318"/>
    <property type="project" value="GO_Central"/>
</dbReference>
<dbReference type="GO" id="GO:0008083">
    <property type="term" value="F:growth factor activity"/>
    <property type="evidence" value="ECO:0007669"/>
    <property type="project" value="UniProtKB-KW"/>
</dbReference>
<dbReference type="GO" id="GO:0005173">
    <property type="term" value="F:stem cell factor receptor binding"/>
    <property type="evidence" value="ECO:0000318"/>
    <property type="project" value="GO_Central"/>
</dbReference>
<dbReference type="GO" id="GO:0007155">
    <property type="term" value="P:cell adhesion"/>
    <property type="evidence" value="ECO:0007669"/>
    <property type="project" value="UniProtKB-KW"/>
</dbReference>
<dbReference type="GO" id="GO:0009891">
    <property type="term" value="P:positive regulation of biosynthetic process"/>
    <property type="evidence" value="ECO:0007669"/>
    <property type="project" value="UniProtKB-ARBA"/>
</dbReference>
<dbReference type="GO" id="GO:0008284">
    <property type="term" value="P:positive regulation of cell population proliferation"/>
    <property type="evidence" value="ECO:0000318"/>
    <property type="project" value="GO_Central"/>
</dbReference>
<dbReference type="FunFam" id="1.20.1250.10:FF:000004">
    <property type="entry name" value="Kit ligand"/>
    <property type="match status" value="1"/>
</dbReference>
<dbReference type="Gene3D" id="1.20.1250.10">
    <property type="match status" value="1"/>
</dbReference>
<dbReference type="InterPro" id="IPR009079">
    <property type="entry name" value="4_helix_cytokine-like_core"/>
</dbReference>
<dbReference type="InterPro" id="IPR003452">
    <property type="entry name" value="SCF"/>
</dbReference>
<dbReference type="PANTHER" id="PTHR11574">
    <property type="entry name" value="KIT LIGAND"/>
    <property type="match status" value="1"/>
</dbReference>
<dbReference type="PANTHER" id="PTHR11574:SF0">
    <property type="entry name" value="KIT LIGAND"/>
    <property type="match status" value="1"/>
</dbReference>
<dbReference type="Pfam" id="PF02404">
    <property type="entry name" value="SCF"/>
    <property type="match status" value="1"/>
</dbReference>
<dbReference type="PIRSF" id="PIRSF015599">
    <property type="entry name" value="SCF"/>
    <property type="match status" value="1"/>
</dbReference>
<dbReference type="SUPFAM" id="SSF47266">
    <property type="entry name" value="4-helical cytokines"/>
    <property type="match status" value="1"/>
</dbReference>
<gene>
    <name type="primary">KITLG</name>
    <name type="synonym">SCF</name>
</gene>
<sequence length="274" mass="31015">MKKTQTWIITCIYLQLLLFNPLVHTQGICSNRVTDDVKDVTKLVANLPKDYMITLKYVPGMDVLPSHCWISEMVEQLSVSLTDLLDKFSNISEGLSNYCIIDKLVKIVDDLVECMEEHSSENVKKSSKSPEPRQFTPEKFFGIFNKSIDAFKDLEIVASKMSECVISSTSSPEKDSRVSVTKPFMLPPVAASSLRNDSSSSNRKASNSIEDSSLQWAAVALPAFFSLVIGFAFGAFYWKKKQPNLTRTVENRQINEEDNEISMLQEKEREFQEV</sequence>
<organism>
    <name type="scientific">Bos taurus</name>
    <name type="common">Bovine</name>
    <dbReference type="NCBI Taxonomy" id="9913"/>
    <lineage>
        <taxon>Eukaryota</taxon>
        <taxon>Metazoa</taxon>
        <taxon>Chordata</taxon>
        <taxon>Craniata</taxon>
        <taxon>Vertebrata</taxon>
        <taxon>Euteleostomi</taxon>
        <taxon>Mammalia</taxon>
        <taxon>Eutheria</taxon>
        <taxon>Laurasiatheria</taxon>
        <taxon>Artiodactyla</taxon>
        <taxon>Ruminantia</taxon>
        <taxon>Pecora</taxon>
        <taxon>Bovidae</taxon>
        <taxon>Bovinae</taxon>
        <taxon>Bos</taxon>
    </lineage>
</organism>
<comment type="function">
    <text evidence="1">Stimulates the proliferation of mast cells. Able to augment the proliferation of both myeloid and lymphoid hematopoietic progenitors in bone marrow culture. Also mediates cell-cell adhesion. Acts synergistically with other cytokines, probably interleukins (By similarity).</text>
</comment>
<comment type="subunit">
    <text evidence="7">Homodimer, non-covalently linked.</text>
</comment>
<comment type="subcellular location">
    <molecule>Isoform 1</molecule>
    <subcellularLocation>
        <location evidence="1">Cell membrane</location>
        <topology evidence="1">Single-pass type I membrane protein</topology>
    </subcellularLocation>
</comment>
<comment type="subcellular location">
    <molecule>Isoform 2</molecule>
    <subcellularLocation>
        <location evidence="3">Cytoplasm</location>
    </subcellularLocation>
    <subcellularLocation>
        <location evidence="1">Cytoplasm</location>
        <location evidence="1">Cytoskeleton</location>
    </subcellularLocation>
    <subcellularLocation>
        <location evidence="3">Cell membrane</location>
        <topology evidence="1">Single-pass type I membrane protein</topology>
    </subcellularLocation>
    <subcellularLocation>
        <location evidence="3">Cell projection</location>
        <location evidence="3">Lamellipodium</location>
    </subcellularLocation>
    <subcellularLocation>
        <location evidence="3">Cell projection</location>
        <location evidence="3">Filopodium</location>
    </subcellularLocation>
</comment>
<comment type="subcellular location">
    <molecule>Soluble KIT ligand</molecule>
    <subcellularLocation>
        <location evidence="1">Secreted</location>
    </subcellularLocation>
</comment>
<comment type="alternative products">
    <event type="alternative splicing"/>
    <isoform>
        <id>Q28132-1</id>
        <name>1</name>
        <sequence type="displayed"/>
    </isoform>
    <isoform>
        <id>Q28132-2</id>
        <name>2</name>
        <sequence type="described" ref="VSP_006020"/>
    </isoform>
</comment>
<comment type="PTM">
    <text evidence="1">A soluble form is produced by proteolytic processing of isoform 1 in the extracellular domain.</text>
</comment>
<comment type="polymorphism">
    <text>The roan locus is responsible for the coat coloration of Belgian Blue and Shorthorn cattle. The solid-colored and white animals are homozygotes, and the roan animals, with intermingled colored and white hairs, are heterozygous. The roan phenotype is due to the Asp-218 mutation.</text>
</comment>
<comment type="similarity">
    <text evidence="7">Belongs to the SCF family.</text>
</comment>
<evidence type="ECO:0000250" key="1"/>
<evidence type="ECO:0000250" key="2">
    <source>
        <dbReference type="UniProtKB" id="P21581"/>
    </source>
</evidence>
<evidence type="ECO:0000250" key="3">
    <source>
        <dbReference type="UniProtKB" id="P21583"/>
    </source>
</evidence>
<evidence type="ECO:0000255" key="4"/>
<evidence type="ECO:0000269" key="5">
    <source>
    </source>
</evidence>
<evidence type="ECO:0000303" key="6">
    <source>
    </source>
</evidence>
<evidence type="ECO:0000305" key="7"/>
<keyword id="KW-0025">Alternative splicing</keyword>
<keyword id="KW-0130">Cell adhesion</keyword>
<keyword id="KW-1003">Cell membrane</keyword>
<keyword id="KW-0966">Cell projection</keyword>
<keyword id="KW-0963">Cytoplasm</keyword>
<keyword id="KW-0206">Cytoskeleton</keyword>
<keyword id="KW-1015">Disulfide bond</keyword>
<keyword id="KW-0325">Glycoprotein</keyword>
<keyword id="KW-0339">Growth factor</keyword>
<keyword id="KW-0472">Membrane</keyword>
<keyword id="KW-0873">Pyrrolidone carboxylic acid</keyword>
<keyword id="KW-1185">Reference proteome</keyword>
<keyword id="KW-0964">Secreted</keyword>
<keyword id="KW-0732">Signal</keyword>
<keyword id="KW-0812">Transmembrane</keyword>
<keyword id="KW-1133">Transmembrane helix</keyword>
<feature type="signal peptide" evidence="4">
    <location>
        <begin position="1"/>
        <end position="25"/>
    </location>
</feature>
<feature type="chain" id="PRO_0000031908" description="Kit ligand">
    <location>
        <begin position="26"/>
        <end position="274"/>
    </location>
</feature>
<feature type="chain" id="PRO_0000403386" description="Soluble KIT ligand" evidence="1">
    <location>
        <begin position="26"/>
        <end position="191"/>
    </location>
</feature>
<feature type="topological domain" description="Extracellular" evidence="4">
    <location>
        <begin position="26"/>
        <end position="215"/>
    </location>
</feature>
<feature type="transmembrane region" description="Helical" evidence="4">
    <location>
        <begin position="216"/>
        <end position="238"/>
    </location>
</feature>
<feature type="topological domain" description="Cytoplasmic" evidence="4">
    <location>
        <begin position="239"/>
        <end position="274"/>
    </location>
</feature>
<feature type="modified residue" description="Pyrrolidone carboxylic acid" evidence="2">
    <location>
        <position position="26"/>
    </location>
</feature>
<feature type="glycosylation site" description="N-linked (GlcNAc...) asparagine" evidence="4">
    <location>
        <position position="90"/>
    </location>
</feature>
<feature type="glycosylation site" description="N-linked (GlcNAc...) asparagine" evidence="4">
    <location>
        <position position="145"/>
    </location>
</feature>
<feature type="glycosylation site" description="N-linked (GlcNAc...) asparagine" evidence="4">
    <location>
        <position position="196"/>
    </location>
</feature>
<feature type="disulfide bond" evidence="1">
    <location>
        <begin position="29"/>
        <end position="114"/>
    </location>
</feature>
<feature type="disulfide bond" evidence="1">
    <location>
        <begin position="68"/>
        <end position="164"/>
    </location>
</feature>
<feature type="splice variant" id="VSP_006020" description="In isoform 2." evidence="6">
    <original>DSRVSVTKPFMLPPVAASSLRNDSSSSNR</original>
    <variation>G</variation>
    <location>
        <begin position="175"/>
        <end position="203"/>
    </location>
</feature>
<feature type="sequence variant" description="In allele roan." evidence="5">
    <original>A</original>
    <variation>D</variation>
    <location>
        <position position="218"/>
    </location>
</feature>
<proteinExistence type="evidence at transcript level"/>